<keyword id="KW-0004">4Fe-4S</keyword>
<keyword id="KW-0150">Chloroplast</keyword>
<keyword id="KW-0408">Iron</keyword>
<keyword id="KW-0411">Iron-sulfur</keyword>
<keyword id="KW-0472">Membrane</keyword>
<keyword id="KW-0479">Metal-binding</keyword>
<keyword id="KW-0520">NAD</keyword>
<keyword id="KW-0521">NADP</keyword>
<keyword id="KW-0934">Plastid</keyword>
<keyword id="KW-0618">Plastoquinone</keyword>
<keyword id="KW-0874">Quinone</keyword>
<keyword id="KW-0677">Repeat</keyword>
<keyword id="KW-0793">Thylakoid</keyword>
<keyword id="KW-1278">Translocase</keyword>
<comment type="function">
    <text evidence="1">NDH shuttles electrons from NAD(P)H:plastoquinone, via FMN and iron-sulfur (Fe-S) centers, to quinones in the photosynthetic chain and possibly in a chloroplast respiratory chain. The immediate electron acceptor for the enzyme in this species is believed to be plastoquinone. Couples the redox reaction to proton translocation, and thus conserves the redox energy in a proton gradient.</text>
</comment>
<comment type="catalytic activity">
    <reaction evidence="1">
        <text>a plastoquinone + NADH + (n+1) H(+)(in) = a plastoquinol + NAD(+) + n H(+)(out)</text>
        <dbReference type="Rhea" id="RHEA:42608"/>
        <dbReference type="Rhea" id="RHEA-COMP:9561"/>
        <dbReference type="Rhea" id="RHEA-COMP:9562"/>
        <dbReference type="ChEBI" id="CHEBI:15378"/>
        <dbReference type="ChEBI" id="CHEBI:17757"/>
        <dbReference type="ChEBI" id="CHEBI:57540"/>
        <dbReference type="ChEBI" id="CHEBI:57945"/>
        <dbReference type="ChEBI" id="CHEBI:62192"/>
    </reaction>
</comment>
<comment type="catalytic activity">
    <reaction evidence="1">
        <text>a plastoquinone + NADPH + (n+1) H(+)(in) = a plastoquinol + NADP(+) + n H(+)(out)</text>
        <dbReference type="Rhea" id="RHEA:42612"/>
        <dbReference type="Rhea" id="RHEA-COMP:9561"/>
        <dbReference type="Rhea" id="RHEA-COMP:9562"/>
        <dbReference type="ChEBI" id="CHEBI:15378"/>
        <dbReference type="ChEBI" id="CHEBI:17757"/>
        <dbReference type="ChEBI" id="CHEBI:57783"/>
        <dbReference type="ChEBI" id="CHEBI:58349"/>
        <dbReference type="ChEBI" id="CHEBI:62192"/>
    </reaction>
</comment>
<comment type="cofactor">
    <cofactor evidence="1">
        <name>[4Fe-4S] cluster</name>
        <dbReference type="ChEBI" id="CHEBI:49883"/>
    </cofactor>
    <text evidence="1">Binds 2 [4Fe-4S] clusters per subunit.</text>
</comment>
<comment type="subunit">
    <text evidence="1">NDH is composed of at least 16 different subunits, 5 of which are encoded in the nucleus.</text>
</comment>
<comment type="subcellular location">
    <subcellularLocation>
        <location evidence="1">Plastid</location>
        <location evidence="1">Chloroplast thylakoid membrane</location>
        <topology evidence="1">Peripheral membrane protein</topology>
    </subcellularLocation>
</comment>
<comment type="similarity">
    <text evidence="1">Belongs to the complex I 23 kDa subunit family.</text>
</comment>
<evidence type="ECO:0000255" key="1">
    <source>
        <dbReference type="HAMAP-Rule" id="MF_01351"/>
    </source>
</evidence>
<feature type="chain" id="PRO_0000298576" description="NAD(P)H-quinone oxidoreductase subunit I, chloroplastic">
    <location>
        <begin position="1"/>
        <end position="167"/>
    </location>
</feature>
<feature type="domain" description="4Fe-4S ferredoxin-type 1" evidence="1">
    <location>
        <begin position="55"/>
        <end position="84"/>
    </location>
</feature>
<feature type="domain" description="4Fe-4S ferredoxin-type 2" evidence="1">
    <location>
        <begin position="95"/>
        <end position="124"/>
    </location>
</feature>
<feature type="binding site" evidence="1">
    <location>
        <position position="64"/>
    </location>
    <ligand>
        <name>[4Fe-4S] cluster</name>
        <dbReference type="ChEBI" id="CHEBI:49883"/>
        <label>1</label>
    </ligand>
</feature>
<feature type="binding site" evidence="1">
    <location>
        <position position="67"/>
    </location>
    <ligand>
        <name>[4Fe-4S] cluster</name>
        <dbReference type="ChEBI" id="CHEBI:49883"/>
        <label>1</label>
    </ligand>
</feature>
<feature type="binding site" evidence="1">
    <location>
        <position position="70"/>
    </location>
    <ligand>
        <name>[4Fe-4S] cluster</name>
        <dbReference type="ChEBI" id="CHEBI:49883"/>
        <label>1</label>
    </ligand>
</feature>
<feature type="binding site" evidence="1">
    <location>
        <position position="74"/>
    </location>
    <ligand>
        <name>[4Fe-4S] cluster</name>
        <dbReference type="ChEBI" id="CHEBI:49883"/>
        <label>2</label>
    </ligand>
</feature>
<feature type="binding site" evidence="1">
    <location>
        <position position="104"/>
    </location>
    <ligand>
        <name>[4Fe-4S] cluster</name>
        <dbReference type="ChEBI" id="CHEBI:49883"/>
        <label>2</label>
    </ligand>
</feature>
<feature type="binding site" evidence="1">
    <location>
        <position position="107"/>
    </location>
    <ligand>
        <name>[4Fe-4S] cluster</name>
        <dbReference type="ChEBI" id="CHEBI:49883"/>
        <label>2</label>
    </ligand>
</feature>
<feature type="binding site" evidence="1">
    <location>
        <position position="110"/>
    </location>
    <ligand>
        <name>[4Fe-4S] cluster</name>
        <dbReference type="ChEBI" id="CHEBI:49883"/>
        <label>2</label>
    </ligand>
</feature>
<feature type="binding site" evidence="1">
    <location>
        <position position="114"/>
    </location>
    <ligand>
        <name>[4Fe-4S] cluster</name>
        <dbReference type="ChEBI" id="CHEBI:49883"/>
        <label>1</label>
    </ligand>
</feature>
<gene>
    <name evidence="1" type="primary">ndhI</name>
</gene>
<geneLocation type="chloroplast"/>
<protein>
    <recommendedName>
        <fullName evidence="1">NAD(P)H-quinone oxidoreductase subunit I, chloroplastic</fullName>
        <ecNumber evidence="1">7.1.1.-</ecNumber>
    </recommendedName>
    <alternativeName>
        <fullName evidence="1">NAD(P)H dehydrogenase subunit I</fullName>
        <shortName evidence="1">NDH subunit I</shortName>
    </alternativeName>
    <alternativeName>
        <fullName evidence="1">NADH-plastoquinone oxidoreductase subunit I</fullName>
    </alternativeName>
</protein>
<reference key="1">
    <citation type="submission" date="2007-03" db="EMBL/GenBank/DDBJ databases">
        <title>Sequencing analysis of Draba nemoroza chloroplast DNA.</title>
        <authorList>
            <person name="Hosouchi T."/>
            <person name="Tsuruoka H."/>
            <person name="Kotani H."/>
        </authorList>
    </citation>
    <scope>NUCLEOTIDE SEQUENCE [LARGE SCALE GENOMIC DNA]</scope>
</reference>
<organism>
    <name type="scientific">Draba nemorosa</name>
    <name type="common">Woodland whitlowgrass</name>
    <dbReference type="NCBI Taxonomy" id="171822"/>
    <lineage>
        <taxon>Eukaryota</taxon>
        <taxon>Viridiplantae</taxon>
        <taxon>Streptophyta</taxon>
        <taxon>Embryophyta</taxon>
        <taxon>Tracheophyta</taxon>
        <taxon>Spermatophyta</taxon>
        <taxon>Magnoliopsida</taxon>
        <taxon>eudicotyledons</taxon>
        <taxon>Gunneridae</taxon>
        <taxon>Pentapetalae</taxon>
        <taxon>rosids</taxon>
        <taxon>malvids</taxon>
        <taxon>Brassicales</taxon>
        <taxon>Brassicaceae</taxon>
        <taxon>Arabideae</taxon>
        <taxon>Draba</taxon>
    </lineage>
</organism>
<proteinExistence type="inferred from homology"/>
<sequence>MLPMITGFMNYGQQTLRAARYIGQGFMITLSHTNRLPVTIQYPYEKLITSERFRGRIHFEFDKCIACEVCVRVCPIDLPVVDWKLETNIRKKRLLNYSIDFGICIFCGNCVEYCPTNCLSMTEEYEFSTYDRHELNYNQIALGRLPMSVMDDYTIRTIWNSPQTKNG</sequence>
<accession>A4QL75</accession>
<dbReference type="EC" id="7.1.1.-" evidence="1"/>
<dbReference type="EMBL" id="AP009373">
    <property type="protein sequence ID" value="BAF50430.1"/>
    <property type="molecule type" value="Genomic_DNA"/>
</dbReference>
<dbReference type="RefSeq" id="YP_001123605.1">
    <property type="nucleotide sequence ID" value="NC_009272.1"/>
</dbReference>
<dbReference type="SMR" id="A4QL75"/>
<dbReference type="GeneID" id="4964693"/>
<dbReference type="GO" id="GO:0009535">
    <property type="term" value="C:chloroplast thylakoid membrane"/>
    <property type="evidence" value="ECO:0007669"/>
    <property type="project" value="UniProtKB-SubCell"/>
</dbReference>
<dbReference type="GO" id="GO:0051539">
    <property type="term" value="F:4 iron, 4 sulfur cluster binding"/>
    <property type="evidence" value="ECO:0007669"/>
    <property type="project" value="UniProtKB-KW"/>
</dbReference>
<dbReference type="GO" id="GO:0005506">
    <property type="term" value="F:iron ion binding"/>
    <property type="evidence" value="ECO:0007669"/>
    <property type="project" value="UniProtKB-UniRule"/>
</dbReference>
<dbReference type="GO" id="GO:0008137">
    <property type="term" value="F:NADH dehydrogenase (ubiquinone) activity"/>
    <property type="evidence" value="ECO:0007669"/>
    <property type="project" value="InterPro"/>
</dbReference>
<dbReference type="GO" id="GO:0048038">
    <property type="term" value="F:quinone binding"/>
    <property type="evidence" value="ECO:0007669"/>
    <property type="project" value="UniProtKB-KW"/>
</dbReference>
<dbReference type="GO" id="GO:0019684">
    <property type="term" value="P:photosynthesis, light reaction"/>
    <property type="evidence" value="ECO:0007669"/>
    <property type="project" value="UniProtKB-UniRule"/>
</dbReference>
<dbReference type="FunFam" id="3.30.70.3270:FF:000006">
    <property type="entry name" value="NAD(P)H-quinone oxidoreductase subunit I, chloroplastic"/>
    <property type="match status" value="1"/>
</dbReference>
<dbReference type="Gene3D" id="3.30.70.3270">
    <property type="match status" value="1"/>
</dbReference>
<dbReference type="HAMAP" id="MF_01351">
    <property type="entry name" value="NDH1_NuoI"/>
    <property type="match status" value="1"/>
</dbReference>
<dbReference type="InterPro" id="IPR017896">
    <property type="entry name" value="4Fe4S_Fe-S-bd"/>
</dbReference>
<dbReference type="InterPro" id="IPR017900">
    <property type="entry name" value="4Fe4S_Fe_S_CS"/>
</dbReference>
<dbReference type="InterPro" id="IPR010226">
    <property type="entry name" value="NADH_quinone_OxRdtase_chainI"/>
</dbReference>
<dbReference type="InterPro" id="IPR004497">
    <property type="entry name" value="NDHI"/>
</dbReference>
<dbReference type="NCBIfam" id="TIGR00403">
    <property type="entry name" value="ndhI"/>
    <property type="match status" value="1"/>
</dbReference>
<dbReference type="NCBIfam" id="TIGR01971">
    <property type="entry name" value="NuoI"/>
    <property type="match status" value="1"/>
</dbReference>
<dbReference type="NCBIfam" id="NF004537">
    <property type="entry name" value="PRK05888.1-3"/>
    <property type="match status" value="1"/>
</dbReference>
<dbReference type="PANTHER" id="PTHR47275">
    <property type="entry name" value="NAD(P)H-QUINONE OXIDOREDUCTASE SUBUNIT I, CHLOROPLASTIC"/>
    <property type="match status" value="1"/>
</dbReference>
<dbReference type="PANTHER" id="PTHR47275:SF1">
    <property type="entry name" value="NAD(P)H-QUINONE OXIDOREDUCTASE SUBUNIT I, CHLOROPLASTIC"/>
    <property type="match status" value="1"/>
</dbReference>
<dbReference type="Pfam" id="PF13187">
    <property type="entry name" value="Fer4_9"/>
    <property type="match status" value="1"/>
</dbReference>
<dbReference type="SUPFAM" id="SSF54862">
    <property type="entry name" value="4Fe-4S ferredoxins"/>
    <property type="match status" value="1"/>
</dbReference>
<dbReference type="PROSITE" id="PS00198">
    <property type="entry name" value="4FE4S_FER_1"/>
    <property type="match status" value="2"/>
</dbReference>
<dbReference type="PROSITE" id="PS51379">
    <property type="entry name" value="4FE4S_FER_2"/>
    <property type="match status" value="2"/>
</dbReference>
<name>NDHI_DRANE</name>